<protein>
    <recommendedName>
        <fullName evidence="1">Large ribosomal subunit protein uL2</fullName>
    </recommendedName>
    <alternativeName>
        <fullName evidence="3">50S ribosomal protein L2</fullName>
    </alternativeName>
</protein>
<name>RL2_MESH7</name>
<comment type="function">
    <text evidence="1">One of the primary rRNA binding proteins. Required for association of the 30S and 50S subunits to form the 70S ribosome, for tRNA binding and peptide bond formation. It has been suggested to have peptidyltransferase activity; this is somewhat controversial. Makes several contacts with the 16S rRNA in the 70S ribosome.</text>
</comment>
<comment type="subunit">
    <text evidence="1">Part of the 50S ribosomal subunit. Forms a bridge to the 30S subunit in the 70S ribosome.</text>
</comment>
<comment type="similarity">
    <text evidence="1">Belongs to the universal ribosomal protein uL2 family.</text>
</comment>
<sequence length="282" mass="31196">MALKYYKPTTNGRRHMSSLDFGANLTTNKPEKSLLTILKKHSGRNSQGKITVRHQGGRHKRKYRLIDFKRNKDDIPGIVKTIEYDPNRSANIALISYIDGEKRYILAPKNLKVGQKISSGPKSDILVGNALPLAKIPEGTFVHNIELKPGAGAKLIRSAGTWAQIQGRDEDGKYVILKLKSGEYRRILATCRATIGVVGNEENSLVNIGKAGRNRHKGIRPTVRGSVMNPNDHPHGGGEGKQPIGRKSPLTPWGKKALGVKTRNPKKPSTKLIIRSRKETKK</sequence>
<reference key="1">
    <citation type="journal article" date="2005" name="J. Bacteriol.">
        <title>Swine and poultry pathogens: the complete genome sequences of two strains of Mycoplasma hyopneumoniae and a strain of Mycoplasma synoviae.</title>
        <authorList>
            <person name="Vasconcelos A.T.R."/>
            <person name="Ferreira H.B."/>
            <person name="Bizarro C.V."/>
            <person name="Bonatto S.L."/>
            <person name="Carvalho M.O."/>
            <person name="Pinto P.M."/>
            <person name="Almeida D.F."/>
            <person name="Almeida L.G.P."/>
            <person name="Almeida R."/>
            <person name="Alves-Junior L."/>
            <person name="Assuncao E.N."/>
            <person name="Azevedo V.A.C."/>
            <person name="Bogo M.R."/>
            <person name="Brigido M.M."/>
            <person name="Brocchi M."/>
            <person name="Burity H.A."/>
            <person name="Camargo A.A."/>
            <person name="Camargo S.S."/>
            <person name="Carepo M.S."/>
            <person name="Carraro D.M."/>
            <person name="de Mattos Cascardo J.C."/>
            <person name="Castro L.A."/>
            <person name="Cavalcanti G."/>
            <person name="Chemale G."/>
            <person name="Collevatti R.G."/>
            <person name="Cunha C.W."/>
            <person name="Dallagiovanna B."/>
            <person name="Dambros B.P."/>
            <person name="Dellagostin O.A."/>
            <person name="Falcao C."/>
            <person name="Fantinatti-Garboggini F."/>
            <person name="Felipe M.S.S."/>
            <person name="Fiorentin L."/>
            <person name="Franco G.R."/>
            <person name="Freitas N.S.A."/>
            <person name="Frias D."/>
            <person name="Grangeiro T.B."/>
            <person name="Grisard E.C."/>
            <person name="Guimaraes C.T."/>
            <person name="Hungria M."/>
            <person name="Jardim S.N."/>
            <person name="Krieger M.A."/>
            <person name="Laurino J.P."/>
            <person name="Lima L.F.A."/>
            <person name="Lopes M.I."/>
            <person name="Loreto E.L.S."/>
            <person name="Madeira H.M.F."/>
            <person name="Manfio G.P."/>
            <person name="Maranhao A.Q."/>
            <person name="Martinkovics C.T."/>
            <person name="Medeiros S.R.B."/>
            <person name="Moreira M.A.M."/>
            <person name="Neiva M."/>
            <person name="Ramalho-Neto C.E."/>
            <person name="Nicolas M.F."/>
            <person name="Oliveira S.C."/>
            <person name="Paixao R.F.C."/>
            <person name="Pedrosa F.O."/>
            <person name="Pena S.D.J."/>
            <person name="Pereira M."/>
            <person name="Pereira-Ferrari L."/>
            <person name="Piffer I."/>
            <person name="Pinto L.S."/>
            <person name="Potrich D.P."/>
            <person name="Salim A.C.M."/>
            <person name="Santos F.R."/>
            <person name="Schmitt R."/>
            <person name="Schneider M.P.C."/>
            <person name="Schrank A."/>
            <person name="Schrank I.S."/>
            <person name="Schuck A.F."/>
            <person name="Seuanez H.N."/>
            <person name="Silva D.W."/>
            <person name="Silva R."/>
            <person name="Silva S.C."/>
            <person name="Soares C.M.A."/>
            <person name="Souza K.R.L."/>
            <person name="Souza R.C."/>
            <person name="Staats C.C."/>
            <person name="Steffens M.B.R."/>
            <person name="Teixeira S.M.R."/>
            <person name="Urmenyi T.P."/>
            <person name="Vainstein M.H."/>
            <person name="Zuccherato L.W."/>
            <person name="Simpson A.J.G."/>
            <person name="Zaha A."/>
        </authorList>
    </citation>
    <scope>NUCLEOTIDE SEQUENCE [LARGE SCALE GENOMIC DNA]</scope>
    <source>
        <strain>7448</strain>
    </source>
</reference>
<evidence type="ECO:0000255" key="1">
    <source>
        <dbReference type="HAMAP-Rule" id="MF_01320"/>
    </source>
</evidence>
<evidence type="ECO:0000256" key="2">
    <source>
        <dbReference type="SAM" id="MobiDB-lite"/>
    </source>
</evidence>
<evidence type="ECO:0000305" key="3"/>
<dbReference type="EMBL" id="AE017244">
    <property type="protein sequence ID" value="AAZ53565.1"/>
    <property type="molecule type" value="Genomic_DNA"/>
</dbReference>
<dbReference type="RefSeq" id="WP_011206027.1">
    <property type="nucleotide sequence ID" value="NC_007332.1"/>
</dbReference>
<dbReference type="SMR" id="Q4A8H4"/>
<dbReference type="KEGG" id="mhp:MHP7448_0191"/>
<dbReference type="HOGENOM" id="CLU_036235_2_1_14"/>
<dbReference type="Proteomes" id="UP000000553">
    <property type="component" value="Chromosome"/>
</dbReference>
<dbReference type="GO" id="GO:0015934">
    <property type="term" value="C:large ribosomal subunit"/>
    <property type="evidence" value="ECO:0007669"/>
    <property type="project" value="InterPro"/>
</dbReference>
<dbReference type="GO" id="GO:0019843">
    <property type="term" value="F:rRNA binding"/>
    <property type="evidence" value="ECO:0007669"/>
    <property type="project" value="UniProtKB-UniRule"/>
</dbReference>
<dbReference type="GO" id="GO:0003735">
    <property type="term" value="F:structural constituent of ribosome"/>
    <property type="evidence" value="ECO:0007669"/>
    <property type="project" value="InterPro"/>
</dbReference>
<dbReference type="GO" id="GO:0016740">
    <property type="term" value="F:transferase activity"/>
    <property type="evidence" value="ECO:0007669"/>
    <property type="project" value="InterPro"/>
</dbReference>
<dbReference type="GO" id="GO:0002181">
    <property type="term" value="P:cytoplasmic translation"/>
    <property type="evidence" value="ECO:0007669"/>
    <property type="project" value="TreeGrafter"/>
</dbReference>
<dbReference type="FunFam" id="2.30.30.30:FF:000001">
    <property type="entry name" value="50S ribosomal protein L2"/>
    <property type="match status" value="1"/>
</dbReference>
<dbReference type="FunFam" id="2.40.50.140:FF:000003">
    <property type="entry name" value="50S ribosomal protein L2"/>
    <property type="match status" value="1"/>
</dbReference>
<dbReference type="FunFam" id="4.10.950.10:FF:000001">
    <property type="entry name" value="50S ribosomal protein L2"/>
    <property type="match status" value="1"/>
</dbReference>
<dbReference type="Gene3D" id="2.30.30.30">
    <property type="match status" value="1"/>
</dbReference>
<dbReference type="Gene3D" id="2.40.50.140">
    <property type="entry name" value="Nucleic acid-binding proteins"/>
    <property type="match status" value="1"/>
</dbReference>
<dbReference type="Gene3D" id="4.10.950.10">
    <property type="entry name" value="Ribosomal protein L2, domain 3"/>
    <property type="match status" value="1"/>
</dbReference>
<dbReference type="HAMAP" id="MF_01320_B">
    <property type="entry name" value="Ribosomal_uL2_B"/>
    <property type="match status" value="1"/>
</dbReference>
<dbReference type="InterPro" id="IPR012340">
    <property type="entry name" value="NA-bd_OB-fold"/>
</dbReference>
<dbReference type="InterPro" id="IPR014722">
    <property type="entry name" value="Rib_uL2_dom2"/>
</dbReference>
<dbReference type="InterPro" id="IPR002171">
    <property type="entry name" value="Ribosomal_uL2"/>
</dbReference>
<dbReference type="InterPro" id="IPR005880">
    <property type="entry name" value="Ribosomal_uL2_bac/org-type"/>
</dbReference>
<dbReference type="InterPro" id="IPR022669">
    <property type="entry name" value="Ribosomal_uL2_C"/>
</dbReference>
<dbReference type="InterPro" id="IPR022671">
    <property type="entry name" value="Ribosomal_uL2_CS"/>
</dbReference>
<dbReference type="InterPro" id="IPR014726">
    <property type="entry name" value="Ribosomal_uL2_dom3"/>
</dbReference>
<dbReference type="InterPro" id="IPR022666">
    <property type="entry name" value="Ribosomal_uL2_RNA-bd_dom"/>
</dbReference>
<dbReference type="InterPro" id="IPR008991">
    <property type="entry name" value="Translation_prot_SH3-like_sf"/>
</dbReference>
<dbReference type="NCBIfam" id="TIGR01171">
    <property type="entry name" value="rplB_bact"/>
    <property type="match status" value="1"/>
</dbReference>
<dbReference type="PANTHER" id="PTHR13691:SF5">
    <property type="entry name" value="LARGE RIBOSOMAL SUBUNIT PROTEIN UL2M"/>
    <property type="match status" value="1"/>
</dbReference>
<dbReference type="PANTHER" id="PTHR13691">
    <property type="entry name" value="RIBOSOMAL PROTEIN L2"/>
    <property type="match status" value="1"/>
</dbReference>
<dbReference type="Pfam" id="PF00181">
    <property type="entry name" value="Ribosomal_L2"/>
    <property type="match status" value="1"/>
</dbReference>
<dbReference type="Pfam" id="PF03947">
    <property type="entry name" value="Ribosomal_L2_C"/>
    <property type="match status" value="1"/>
</dbReference>
<dbReference type="PIRSF" id="PIRSF002158">
    <property type="entry name" value="Ribosomal_L2"/>
    <property type="match status" value="1"/>
</dbReference>
<dbReference type="SMART" id="SM01383">
    <property type="entry name" value="Ribosomal_L2"/>
    <property type="match status" value="1"/>
</dbReference>
<dbReference type="SMART" id="SM01382">
    <property type="entry name" value="Ribosomal_L2_C"/>
    <property type="match status" value="1"/>
</dbReference>
<dbReference type="SUPFAM" id="SSF50249">
    <property type="entry name" value="Nucleic acid-binding proteins"/>
    <property type="match status" value="1"/>
</dbReference>
<dbReference type="SUPFAM" id="SSF50104">
    <property type="entry name" value="Translation proteins SH3-like domain"/>
    <property type="match status" value="1"/>
</dbReference>
<dbReference type="PROSITE" id="PS00467">
    <property type="entry name" value="RIBOSOMAL_L2"/>
    <property type="match status" value="1"/>
</dbReference>
<keyword id="KW-0687">Ribonucleoprotein</keyword>
<keyword id="KW-0689">Ribosomal protein</keyword>
<keyword id="KW-0694">RNA-binding</keyword>
<keyword id="KW-0699">rRNA-binding</keyword>
<accession>Q4A8H4</accession>
<feature type="chain" id="PRO_0000237209" description="Large ribosomal subunit protein uL2">
    <location>
        <begin position="1"/>
        <end position="282"/>
    </location>
</feature>
<feature type="region of interest" description="Disordered" evidence="2">
    <location>
        <begin position="215"/>
        <end position="282"/>
    </location>
</feature>
<feature type="compositionally biased region" description="Basic residues" evidence="2">
    <location>
        <begin position="263"/>
        <end position="282"/>
    </location>
</feature>
<proteinExistence type="inferred from homology"/>
<gene>
    <name evidence="1" type="primary">rplB</name>
    <name type="ordered locus">MHP7448_0191</name>
</gene>
<organism>
    <name type="scientific">Mesomycoplasma hyopneumoniae (strain 7448)</name>
    <name type="common">Mycoplasma hyopneumoniae</name>
    <dbReference type="NCBI Taxonomy" id="262722"/>
    <lineage>
        <taxon>Bacteria</taxon>
        <taxon>Bacillati</taxon>
        <taxon>Mycoplasmatota</taxon>
        <taxon>Mycoplasmoidales</taxon>
        <taxon>Metamycoplasmataceae</taxon>
        <taxon>Mesomycoplasma</taxon>
    </lineage>
</organism>